<comment type="function">
    <text evidence="1">Catalyzes the methylation of C-1 in cobalt-precorrin-5B to form cobalt-precorrin-6A.</text>
</comment>
<comment type="catalytic activity">
    <reaction evidence="1">
        <text>Co-precorrin-5B + S-adenosyl-L-methionine = Co-precorrin-6A + S-adenosyl-L-homocysteine</text>
        <dbReference type="Rhea" id="RHEA:26285"/>
        <dbReference type="ChEBI" id="CHEBI:57856"/>
        <dbReference type="ChEBI" id="CHEBI:59789"/>
        <dbReference type="ChEBI" id="CHEBI:60063"/>
        <dbReference type="ChEBI" id="CHEBI:60064"/>
        <dbReference type="EC" id="2.1.1.195"/>
    </reaction>
</comment>
<comment type="pathway">
    <text evidence="1">Cofactor biosynthesis; adenosylcobalamin biosynthesis; cob(II)yrinate a,c-diamide from sirohydrochlorin (anaerobic route): step 6/10.</text>
</comment>
<comment type="similarity">
    <text evidence="1">Belongs to the CbiD family.</text>
</comment>
<protein>
    <recommendedName>
        <fullName evidence="1">Cobalt-precorrin-5B C(1)-methyltransferase</fullName>
        <ecNumber evidence="1">2.1.1.195</ecNumber>
    </recommendedName>
    <alternativeName>
        <fullName evidence="1">Cobalt-precorrin-6A synthase</fullName>
    </alternativeName>
</protein>
<organism>
    <name type="scientific">Clostridium perfringens (strain 13 / Type A)</name>
    <dbReference type="NCBI Taxonomy" id="195102"/>
    <lineage>
        <taxon>Bacteria</taxon>
        <taxon>Bacillati</taxon>
        <taxon>Bacillota</taxon>
        <taxon>Clostridia</taxon>
        <taxon>Eubacteriales</taxon>
        <taxon>Clostridiaceae</taxon>
        <taxon>Clostridium</taxon>
    </lineage>
</organism>
<name>CBID_CLOPE</name>
<proteinExistence type="inferred from homology"/>
<gene>
    <name evidence="1" type="primary">cbiD</name>
    <name type="ordered locus">CPE1226</name>
</gene>
<feature type="chain" id="PRO_0000141662" description="Cobalt-precorrin-5B C(1)-methyltransferase">
    <location>
        <begin position="1"/>
        <end position="365"/>
    </location>
</feature>
<dbReference type="EC" id="2.1.1.195" evidence="1"/>
<dbReference type="EMBL" id="BA000016">
    <property type="protein sequence ID" value="BAB80932.1"/>
    <property type="molecule type" value="Genomic_DNA"/>
</dbReference>
<dbReference type="RefSeq" id="WP_011010337.1">
    <property type="nucleotide sequence ID" value="NC_003366.1"/>
</dbReference>
<dbReference type="SMR" id="Q8XL16"/>
<dbReference type="STRING" id="195102.gene:10490489"/>
<dbReference type="KEGG" id="cpe:CPE1226"/>
<dbReference type="HOGENOM" id="CLU_041273_1_0_9"/>
<dbReference type="UniPathway" id="UPA00148">
    <property type="reaction ID" value="UER00227"/>
</dbReference>
<dbReference type="Proteomes" id="UP000000818">
    <property type="component" value="Chromosome"/>
</dbReference>
<dbReference type="GO" id="GO:0043780">
    <property type="term" value="F:cobalt-precorrin-5B C1-methyltransferase activity"/>
    <property type="evidence" value="ECO:0007669"/>
    <property type="project" value="RHEA"/>
</dbReference>
<dbReference type="GO" id="GO:0019251">
    <property type="term" value="P:anaerobic cobalamin biosynthetic process"/>
    <property type="evidence" value="ECO:0007669"/>
    <property type="project" value="UniProtKB-UniRule"/>
</dbReference>
<dbReference type="GO" id="GO:0032259">
    <property type="term" value="P:methylation"/>
    <property type="evidence" value="ECO:0007669"/>
    <property type="project" value="UniProtKB-KW"/>
</dbReference>
<dbReference type="Gene3D" id="3.30.2110.10">
    <property type="entry name" value="CbiD-like"/>
    <property type="match status" value="1"/>
</dbReference>
<dbReference type="HAMAP" id="MF_00787">
    <property type="entry name" value="CbiD"/>
    <property type="match status" value="1"/>
</dbReference>
<dbReference type="InterPro" id="IPR002748">
    <property type="entry name" value="CbiD"/>
</dbReference>
<dbReference type="InterPro" id="IPR036074">
    <property type="entry name" value="CbiD_sf"/>
</dbReference>
<dbReference type="NCBIfam" id="TIGR00312">
    <property type="entry name" value="cbiD"/>
    <property type="match status" value="1"/>
</dbReference>
<dbReference type="PANTHER" id="PTHR35863">
    <property type="entry name" value="COBALT-PRECORRIN-5B C(1)-METHYLTRANSFERASE"/>
    <property type="match status" value="1"/>
</dbReference>
<dbReference type="PANTHER" id="PTHR35863:SF1">
    <property type="entry name" value="COBALT-PRECORRIN-5B C(1)-METHYLTRANSFERASE"/>
    <property type="match status" value="1"/>
</dbReference>
<dbReference type="Pfam" id="PF01888">
    <property type="entry name" value="CbiD"/>
    <property type="match status" value="1"/>
</dbReference>
<dbReference type="PIRSF" id="PIRSF026782">
    <property type="entry name" value="CbiD"/>
    <property type="match status" value="1"/>
</dbReference>
<dbReference type="SUPFAM" id="SSF111342">
    <property type="entry name" value="CbiD-like"/>
    <property type="match status" value="1"/>
</dbReference>
<accession>Q8XL16</accession>
<keyword id="KW-0169">Cobalamin biosynthesis</keyword>
<keyword id="KW-0489">Methyltransferase</keyword>
<keyword id="KW-1185">Reference proteome</keyword>
<keyword id="KW-0949">S-adenosyl-L-methionine</keyword>
<keyword id="KW-0808">Transferase</keyword>
<evidence type="ECO:0000255" key="1">
    <source>
        <dbReference type="HAMAP-Rule" id="MF_00787"/>
    </source>
</evidence>
<reference key="1">
    <citation type="journal article" date="2002" name="Proc. Natl. Acad. Sci. U.S.A.">
        <title>Complete genome sequence of Clostridium perfringens, an anaerobic flesh-eater.</title>
        <authorList>
            <person name="Shimizu T."/>
            <person name="Ohtani K."/>
            <person name="Hirakawa H."/>
            <person name="Ohshima K."/>
            <person name="Yamashita A."/>
            <person name="Shiba T."/>
            <person name="Ogasawara N."/>
            <person name="Hattori M."/>
            <person name="Kuhara S."/>
            <person name="Hayashi H."/>
        </authorList>
    </citation>
    <scope>NUCLEOTIDE SEQUENCE [LARGE SCALE GENOMIC DNA]</scope>
    <source>
        <strain>13 / Type A</strain>
    </source>
</reference>
<sequence length="365" mass="40503">MFDMYIESGGKKLRCGYTTGSCAAAAAKAATYMLFNKKDISVIEIDTPKNIKLNLEIQDIQVEKNSISCSIVKDGGDDIDATSGLEIFAKAEEVEEGFELCGGEGVGVVTKEGLFVEKGQPAINPVPREMIKKEVLSVLPKDKGVRITIFVPRGREIAKKTFNPRLGIVNGISILGTTGIVYPMSEEALKESIRIEIRQKAVNNKDLVFVFGNMGERFLRERGYKKDNIVVISNYVGFSIECALAQGIKDLTIVGHIGKLSKIAFGCFNTHSRVSDVRLEVIALELTLMGYDLELVQKVLDQKTSEGAVRLLGEDFPMLYERIGEKVLNRLDIYAYGEANFNILMYYGSKEMKLLYESKNSNLFD</sequence>